<dbReference type="EMBL" id="CP001103">
    <property type="protein sequence ID" value="AEA96604.1"/>
    <property type="molecule type" value="Genomic_DNA"/>
</dbReference>
<dbReference type="RefSeq" id="WP_012516960.1">
    <property type="nucleotide sequence ID" value="NC_011138.3"/>
</dbReference>
<dbReference type="SMR" id="B4S094"/>
<dbReference type="KEGG" id="amc:MADE_1002275"/>
<dbReference type="HOGENOM" id="CLU_036235_2_1_6"/>
<dbReference type="Proteomes" id="UP000001870">
    <property type="component" value="Chromosome"/>
</dbReference>
<dbReference type="GO" id="GO:0015934">
    <property type="term" value="C:large ribosomal subunit"/>
    <property type="evidence" value="ECO:0007669"/>
    <property type="project" value="InterPro"/>
</dbReference>
<dbReference type="GO" id="GO:0019843">
    <property type="term" value="F:rRNA binding"/>
    <property type="evidence" value="ECO:0007669"/>
    <property type="project" value="UniProtKB-UniRule"/>
</dbReference>
<dbReference type="GO" id="GO:0003735">
    <property type="term" value="F:structural constituent of ribosome"/>
    <property type="evidence" value="ECO:0007669"/>
    <property type="project" value="InterPro"/>
</dbReference>
<dbReference type="GO" id="GO:0016740">
    <property type="term" value="F:transferase activity"/>
    <property type="evidence" value="ECO:0007669"/>
    <property type="project" value="InterPro"/>
</dbReference>
<dbReference type="GO" id="GO:0002181">
    <property type="term" value="P:cytoplasmic translation"/>
    <property type="evidence" value="ECO:0007669"/>
    <property type="project" value="TreeGrafter"/>
</dbReference>
<dbReference type="FunFam" id="2.30.30.30:FF:000001">
    <property type="entry name" value="50S ribosomal protein L2"/>
    <property type="match status" value="1"/>
</dbReference>
<dbReference type="FunFam" id="2.40.50.140:FF:000003">
    <property type="entry name" value="50S ribosomal protein L2"/>
    <property type="match status" value="1"/>
</dbReference>
<dbReference type="FunFam" id="4.10.950.10:FF:000001">
    <property type="entry name" value="50S ribosomal protein L2"/>
    <property type="match status" value="1"/>
</dbReference>
<dbReference type="Gene3D" id="2.30.30.30">
    <property type="match status" value="1"/>
</dbReference>
<dbReference type="Gene3D" id="2.40.50.140">
    <property type="entry name" value="Nucleic acid-binding proteins"/>
    <property type="match status" value="1"/>
</dbReference>
<dbReference type="Gene3D" id="4.10.950.10">
    <property type="entry name" value="Ribosomal protein L2, domain 3"/>
    <property type="match status" value="1"/>
</dbReference>
<dbReference type="HAMAP" id="MF_01320_B">
    <property type="entry name" value="Ribosomal_uL2_B"/>
    <property type="match status" value="1"/>
</dbReference>
<dbReference type="InterPro" id="IPR012340">
    <property type="entry name" value="NA-bd_OB-fold"/>
</dbReference>
<dbReference type="InterPro" id="IPR014722">
    <property type="entry name" value="Rib_uL2_dom2"/>
</dbReference>
<dbReference type="InterPro" id="IPR002171">
    <property type="entry name" value="Ribosomal_uL2"/>
</dbReference>
<dbReference type="InterPro" id="IPR005880">
    <property type="entry name" value="Ribosomal_uL2_bac/org-type"/>
</dbReference>
<dbReference type="InterPro" id="IPR022669">
    <property type="entry name" value="Ribosomal_uL2_C"/>
</dbReference>
<dbReference type="InterPro" id="IPR022671">
    <property type="entry name" value="Ribosomal_uL2_CS"/>
</dbReference>
<dbReference type="InterPro" id="IPR014726">
    <property type="entry name" value="Ribosomal_uL2_dom3"/>
</dbReference>
<dbReference type="InterPro" id="IPR022666">
    <property type="entry name" value="Ribosomal_uL2_RNA-bd_dom"/>
</dbReference>
<dbReference type="InterPro" id="IPR008991">
    <property type="entry name" value="Translation_prot_SH3-like_sf"/>
</dbReference>
<dbReference type="NCBIfam" id="TIGR01171">
    <property type="entry name" value="rplB_bact"/>
    <property type="match status" value="1"/>
</dbReference>
<dbReference type="PANTHER" id="PTHR13691:SF5">
    <property type="entry name" value="LARGE RIBOSOMAL SUBUNIT PROTEIN UL2M"/>
    <property type="match status" value="1"/>
</dbReference>
<dbReference type="PANTHER" id="PTHR13691">
    <property type="entry name" value="RIBOSOMAL PROTEIN L2"/>
    <property type="match status" value="1"/>
</dbReference>
<dbReference type="Pfam" id="PF00181">
    <property type="entry name" value="Ribosomal_L2"/>
    <property type="match status" value="1"/>
</dbReference>
<dbReference type="Pfam" id="PF03947">
    <property type="entry name" value="Ribosomal_L2_C"/>
    <property type="match status" value="1"/>
</dbReference>
<dbReference type="PIRSF" id="PIRSF002158">
    <property type="entry name" value="Ribosomal_L2"/>
    <property type="match status" value="1"/>
</dbReference>
<dbReference type="SMART" id="SM01383">
    <property type="entry name" value="Ribosomal_L2"/>
    <property type="match status" value="1"/>
</dbReference>
<dbReference type="SMART" id="SM01382">
    <property type="entry name" value="Ribosomal_L2_C"/>
    <property type="match status" value="1"/>
</dbReference>
<dbReference type="SUPFAM" id="SSF50249">
    <property type="entry name" value="Nucleic acid-binding proteins"/>
    <property type="match status" value="1"/>
</dbReference>
<dbReference type="SUPFAM" id="SSF50104">
    <property type="entry name" value="Translation proteins SH3-like domain"/>
    <property type="match status" value="1"/>
</dbReference>
<dbReference type="PROSITE" id="PS00467">
    <property type="entry name" value="RIBOSOMAL_L2"/>
    <property type="match status" value="1"/>
</dbReference>
<feature type="chain" id="PRO_1000141499" description="Large ribosomal subunit protein uL2">
    <location>
        <begin position="1"/>
        <end position="274"/>
    </location>
</feature>
<feature type="region of interest" description="Disordered" evidence="2">
    <location>
        <begin position="28"/>
        <end position="54"/>
    </location>
</feature>
<feature type="region of interest" description="Disordered" evidence="2">
    <location>
        <begin position="223"/>
        <end position="265"/>
    </location>
</feature>
<feature type="compositionally biased region" description="Low complexity" evidence="2">
    <location>
        <begin position="39"/>
        <end position="48"/>
    </location>
</feature>
<proteinExistence type="inferred from homology"/>
<accession>B4S094</accession>
<accession>F2G5N7</accession>
<name>RL2_ALTMD</name>
<keyword id="KW-0687">Ribonucleoprotein</keyword>
<keyword id="KW-0689">Ribosomal protein</keyword>
<keyword id="KW-0694">RNA-binding</keyword>
<keyword id="KW-0699">rRNA-binding</keyword>
<reference key="1">
    <citation type="journal article" date="2008" name="ISME J.">
        <title>Comparative genomics of two ecotypes of the marine planktonic copiotroph Alteromonas macleodii suggests alternative lifestyles associated with different kinds of particulate organic matter.</title>
        <authorList>
            <person name="Ivars-Martinez E."/>
            <person name="Martin-Cuadrado A.-B."/>
            <person name="D'Auria G."/>
            <person name="Mira A."/>
            <person name="Ferriera S."/>
            <person name="Johnson J."/>
            <person name="Friedman R."/>
            <person name="Rodriguez-Valera F."/>
        </authorList>
    </citation>
    <scope>NUCLEOTIDE SEQUENCE [LARGE SCALE GENOMIC DNA]</scope>
    <source>
        <strain>DSM 17117 / CIP 110805 / LMG 28347 / Deep ecotype</strain>
    </source>
</reference>
<gene>
    <name evidence="1" type="primary">rplB</name>
    <name type="ordered locus">MADE_1002275</name>
</gene>
<sequence>MPLLKAKPTSAGRRHVVQVVNPDLHKGAPYAPLLEKNSKSGGRNNNGRITTRHIGGGHKQHYRVIDFKRNKDGIPAKVERLEYDPNRSANIALVLYADGERRYILAPKGMKAGDAIQSGSGAPIKSGNTLPMRNIPVGTVVHAIEMKPGKGAQIARSAGAYAQILARDGNYVTLRLRSGEMRKVLSDCRATIGEVGNAEHMLRSLGKAGATRWRGIRPTVRGVAMNPVDHPHGGGEGRTSGGRHPVTPWGVPTKGKKTRSNKRTDKLIVRRRNK</sequence>
<comment type="function">
    <text evidence="1">One of the primary rRNA binding proteins. Required for association of the 30S and 50S subunits to form the 70S ribosome, for tRNA binding and peptide bond formation. It has been suggested to have peptidyltransferase activity; this is somewhat controversial. Makes several contacts with the 16S rRNA in the 70S ribosome.</text>
</comment>
<comment type="subunit">
    <text evidence="1">Part of the 50S ribosomal subunit. Forms a bridge to the 30S subunit in the 70S ribosome.</text>
</comment>
<comment type="similarity">
    <text evidence="1">Belongs to the universal ribosomal protein uL2 family.</text>
</comment>
<protein>
    <recommendedName>
        <fullName evidence="1">Large ribosomal subunit protein uL2</fullName>
    </recommendedName>
    <alternativeName>
        <fullName evidence="3">50S ribosomal protein L2</fullName>
    </alternativeName>
</protein>
<organism>
    <name type="scientific">Alteromonas mediterranea (strain DSM 17117 / CIP 110805 / LMG 28347 / Deep ecotype)</name>
    <dbReference type="NCBI Taxonomy" id="1774373"/>
    <lineage>
        <taxon>Bacteria</taxon>
        <taxon>Pseudomonadati</taxon>
        <taxon>Pseudomonadota</taxon>
        <taxon>Gammaproteobacteria</taxon>
        <taxon>Alteromonadales</taxon>
        <taxon>Alteromonadaceae</taxon>
        <taxon>Alteromonas/Salinimonas group</taxon>
        <taxon>Alteromonas</taxon>
    </lineage>
</organism>
<evidence type="ECO:0000255" key="1">
    <source>
        <dbReference type="HAMAP-Rule" id="MF_01320"/>
    </source>
</evidence>
<evidence type="ECO:0000256" key="2">
    <source>
        <dbReference type="SAM" id="MobiDB-lite"/>
    </source>
</evidence>
<evidence type="ECO:0000305" key="3"/>